<dbReference type="EC" id="3.6.1.54" evidence="1"/>
<dbReference type="EMBL" id="AE005174">
    <property type="protein sequence ID" value="AAG54881.1"/>
    <property type="molecule type" value="Genomic_DNA"/>
</dbReference>
<dbReference type="EMBL" id="BA000007">
    <property type="protein sequence ID" value="BAB34009.1"/>
    <property type="molecule type" value="Genomic_DNA"/>
</dbReference>
<dbReference type="PIR" id="B90702">
    <property type="entry name" value="B90702"/>
</dbReference>
<dbReference type="PIR" id="E85552">
    <property type="entry name" value="E85552"/>
</dbReference>
<dbReference type="RefSeq" id="NP_308613.1">
    <property type="nucleotide sequence ID" value="NC_002695.1"/>
</dbReference>
<dbReference type="RefSeq" id="WP_000212254.1">
    <property type="nucleotide sequence ID" value="NZ_VOAI01000030.1"/>
</dbReference>
<dbReference type="SMR" id="Q8XCU1"/>
<dbReference type="STRING" id="155864.Z0679"/>
<dbReference type="GeneID" id="916941"/>
<dbReference type="KEGG" id="ece:Z0679"/>
<dbReference type="KEGG" id="ecs:ECs_0586"/>
<dbReference type="PATRIC" id="fig|386585.9.peg.693"/>
<dbReference type="eggNOG" id="COG2908">
    <property type="taxonomic scope" value="Bacteria"/>
</dbReference>
<dbReference type="HOGENOM" id="CLU_074586_0_0_6"/>
<dbReference type="OMA" id="GHRHLPM"/>
<dbReference type="UniPathway" id="UPA00359">
    <property type="reaction ID" value="UER00480"/>
</dbReference>
<dbReference type="Proteomes" id="UP000000558">
    <property type="component" value="Chromosome"/>
</dbReference>
<dbReference type="Proteomes" id="UP000002519">
    <property type="component" value="Chromosome"/>
</dbReference>
<dbReference type="GO" id="GO:0005737">
    <property type="term" value="C:cytoplasm"/>
    <property type="evidence" value="ECO:0007669"/>
    <property type="project" value="InterPro"/>
</dbReference>
<dbReference type="GO" id="GO:0019897">
    <property type="term" value="C:extrinsic component of plasma membrane"/>
    <property type="evidence" value="ECO:0007669"/>
    <property type="project" value="UniProtKB-UniRule"/>
</dbReference>
<dbReference type="GO" id="GO:0030145">
    <property type="term" value="F:manganese ion binding"/>
    <property type="evidence" value="ECO:0007669"/>
    <property type="project" value="UniProtKB-UniRule"/>
</dbReference>
<dbReference type="GO" id="GO:0008758">
    <property type="term" value="F:UDP-2,3-diacylglucosamine hydrolase activity"/>
    <property type="evidence" value="ECO:0007669"/>
    <property type="project" value="UniProtKB-UniRule"/>
</dbReference>
<dbReference type="GO" id="GO:0009245">
    <property type="term" value="P:lipid A biosynthetic process"/>
    <property type="evidence" value="ECO:0007669"/>
    <property type="project" value="UniProtKB-UniRule"/>
</dbReference>
<dbReference type="CDD" id="cd07398">
    <property type="entry name" value="MPP_YbbF-LpxH"/>
    <property type="match status" value="1"/>
</dbReference>
<dbReference type="FunFam" id="3.60.21.10:FF:000012">
    <property type="entry name" value="UDP-2,3-diacylglucosamine hydrolase"/>
    <property type="match status" value="1"/>
</dbReference>
<dbReference type="Gene3D" id="3.60.21.10">
    <property type="match status" value="1"/>
</dbReference>
<dbReference type="HAMAP" id="MF_00575">
    <property type="entry name" value="LpxH"/>
    <property type="match status" value="1"/>
</dbReference>
<dbReference type="InterPro" id="IPR004843">
    <property type="entry name" value="Calcineurin-like_PHP_ApaH"/>
</dbReference>
<dbReference type="InterPro" id="IPR043461">
    <property type="entry name" value="LpxH-like"/>
</dbReference>
<dbReference type="InterPro" id="IPR029052">
    <property type="entry name" value="Metallo-depent_PP-like"/>
</dbReference>
<dbReference type="InterPro" id="IPR010138">
    <property type="entry name" value="UDP-diacylglucosamine_Hdrlase"/>
</dbReference>
<dbReference type="NCBIfam" id="TIGR01854">
    <property type="entry name" value="lipid_A_lpxH"/>
    <property type="match status" value="1"/>
</dbReference>
<dbReference type="NCBIfam" id="NF003743">
    <property type="entry name" value="PRK05340.1"/>
    <property type="match status" value="1"/>
</dbReference>
<dbReference type="PANTHER" id="PTHR34990:SF1">
    <property type="entry name" value="UDP-2,3-DIACYLGLUCOSAMINE HYDROLASE"/>
    <property type="match status" value="1"/>
</dbReference>
<dbReference type="PANTHER" id="PTHR34990">
    <property type="entry name" value="UDP-2,3-DIACYLGLUCOSAMINE HYDROLASE-RELATED"/>
    <property type="match status" value="1"/>
</dbReference>
<dbReference type="Pfam" id="PF00149">
    <property type="entry name" value="Metallophos"/>
    <property type="match status" value="1"/>
</dbReference>
<dbReference type="SUPFAM" id="SSF56300">
    <property type="entry name" value="Metallo-dependent phosphatases"/>
    <property type="match status" value="1"/>
</dbReference>
<protein>
    <recommendedName>
        <fullName evidence="1">UDP-2,3-diacylglucosamine hydrolase</fullName>
        <ecNumber evidence="1">3.6.1.54</ecNumber>
    </recommendedName>
    <alternativeName>
        <fullName evidence="1">UDP-2,3-diacylglucosamine diphosphatase</fullName>
    </alternativeName>
</protein>
<feature type="chain" id="PRO_0000214110" description="UDP-2,3-diacylglucosamine hydrolase">
    <location>
        <begin position="1"/>
        <end position="240"/>
    </location>
</feature>
<feature type="binding site" evidence="1">
    <location>
        <position position="8"/>
    </location>
    <ligand>
        <name>Mn(2+)</name>
        <dbReference type="ChEBI" id="CHEBI:29035"/>
        <label>1</label>
    </ligand>
</feature>
<feature type="binding site" evidence="1">
    <location>
        <position position="10"/>
    </location>
    <ligand>
        <name>Mn(2+)</name>
        <dbReference type="ChEBI" id="CHEBI:29035"/>
        <label>1</label>
    </ligand>
</feature>
<feature type="binding site" evidence="1">
    <location>
        <position position="41"/>
    </location>
    <ligand>
        <name>Mn(2+)</name>
        <dbReference type="ChEBI" id="CHEBI:29035"/>
        <label>1</label>
    </ligand>
</feature>
<feature type="binding site" evidence="1">
    <location>
        <position position="41"/>
    </location>
    <ligand>
        <name>Mn(2+)</name>
        <dbReference type="ChEBI" id="CHEBI:29035"/>
        <label>2</label>
    </ligand>
</feature>
<feature type="binding site" evidence="1">
    <location>
        <begin position="79"/>
        <end position="80"/>
    </location>
    <ligand>
        <name>substrate</name>
    </ligand>
</feature>
<feature type="binding site" evidence="1">
    <location>
        <position position="79"/>
    </location>
    <ligand>
        <name>Mn(2+)</name>
        <dbReference type="ChEBI" id="CHEBI:29035"/>
        <label>2</label>
    </ligand>
</feature>
<feature type="binding site" evidence="1">
    <location>
        <position position="114"/>
    </location>
    <ligand>
        <name>Mn(2+)</name>
        <dbReference type="ChEBI" id="CHEBI:29035"/>
        <label>2</label>
    </ligand>
</feature>
<feature type="binding site" evidence="1">
    <location>
        <position position="122"/>
    </location>
    <ligand>
        <name>substrate</name>
    </ligand>
</feature>
<feature type="binding site" evidence="1">
    <location>
        <position position="160"/>
    </location>
    <ligand>
        <name>substrate</name>
    </ligand>
</feature>
<feature type="binding site" evidence="1">
    <location>
        <position position="164"/>
    </location>
    <ligand>
        <name>substrate</name>
    </ligand>
</feature>
<feature type="binding site" evidence="1">
    <location>
        <position position="167"/>
    </location>
    <ligand>
        <name>substrate</name>
    </ligand>
</feature>
<feature type="binding site" evidence="1">
    <location>
        <position position="195"/>
    </location>
    <ligand>
        <name>Mn(2+)</name>
        <dbReference type="ChEBI" id="CHEBI:29035"/>
        <label>2</label>
    </ligand>
</feature>
<feature type="binding site" evidence="1">
    <location>
        <position position="195"/>
    </location>
    <ligand>
        <name>substrate</name>
    </ligand>
</feature>
<feature type="binding site" evidence="1">
    <location>
        <position position="197"/>
    </location>
    <ligand>
        <name>Mn(2+)</name>
        <dbReference type="ChEBI" id="CHEBI:29035"/>
        <label>1</label>
    </ligand>
</feature>
<comment type="function">
    <text evidence="1">Hydrolyzes the pyrophosphate bond of UDP-2,3-diacylglucosamine to yield 2,3-diacylglucosamine 1-phosphate (lipid X) and UMP by catalyzing the attack of water at the alpha-P atom. Involved in the biosynthesis of lipid A, a phosphorylated glycolipid that anchors the lipopolysaccharide to the outer membrane of the cell.</text>
</comment>
<comment type="catalytic activity">
    <reaction evidence="1">
        <text>UDP-2-N,3-O-bis[(3R)-3-hydroxytetradecanoyl]-alpha-D-glucosamine + H2O = 2-N,3-O-bis[(3R)-3-hydroxytetradecanoyl]-alpha-D-glucosaminyl 1-phosphate + UMP + 2 H(+)</text>
        <dbReference type="Rhea" id="RHEA:25213"/>
        <dbReference type="ChEBI" id="CHEBI:15377"/>
        <dbReference type="ChEBI" id="CHEBI:15378"/>
        <dbReference type="ChEBI" id="CHEBI:57865"/>
        <dbReference type="ChEBI" id="CHEBI:57957"/>
        <dbReference type="ChEBI" id="CHEBI:78847"/>
        <dbReference type="EC" id="3.6.1.54"/>
    </reaction>
</comment>
<comment type="cofactor">
    <cofactor evidence="1">
        <name>Mn(2+)</name>
        <dbReference type="ChEBI" id="CHEBI:29035"/>
    </cofactor>
    <text evidence="1">Binds 2 Mn(2+) ions per subunit in a binuclear metal center.</text>
</comment>
<comment type="pathway">
    <text evidence="1">Glycolipid biosynthesis; lipid IV(A) biosynthesis; lipid IV(A) from (3R)-3-hydroxytetradecanoyl-[acyl-carrier-protein] and UDP-N-acetyl-alpha-D-glucosamine: step 4/6.</text>
</comment>
<comment type="subcellular location">
    <subcellularLocation>
        <location evidence="1">Cell inner membrane</location>
        <topology evidence="1">Peripheral membrane protein</topology>
        <orientation evidence="1">Cytoplasmic side</orientation>
    </subcellularLocation>
</comment>
<comment type="similarity">
    <text evidence="1">Belongs to the LpxH family.</text>
</comment>
<gene>
    <name evidence="1" type="primary">lpxH</name>
    <name type="ordered locus">Z0679</name>
    <name type="ordered locus">ECs0586</name>
</gene>
<evidence type="ECO:0000255" key="1">
    <source>
        <dbReference type="HAMAP-Rule" id="MF_00575"/>
    </source>
</evidence>
<sequence length="240" mass="26952">MATLFIADLHLCVEEPAITAGFLRFLAGEARKADALYILGDLFEAWIGDDDPNPLHRQMAAAIKAVSDSGVPCYFIHGNRDFLLGKRFARESGMTLLPEEKVLELYGRRVLIMHGDTLCTDDAGYQAFRTKVHKPWLQTLFLALPLFVRKRIAVRMRANSKEANSSKSLAIMDVNQNAVVSAMEKHQVQWLIHGHTHRPAVHELIANQQPAFRVVLGAWHTEGSMVKVTADDVELIHFPF</sequence>
<proteinExistence type="inferred from homology"/>
<name>LPXH_ECO57</name>
<accession>Q8XCU1</accession>
<organism>
    <name type="scientific">Escherichia coli O157:H7</name>
    <dbReference type="NCBI Taxonomy" id="83334"/>
    <lineage>
        <taxon>Bacteria</taxon>
        <taxon>Pseudomonadati</taxon>
        <taxon>Pseudomonadota</taxon>
        <taxon>Gammaproteobacteria</taxon>
        <taxon>Enterobacterales</taxon>
        <taxon>Enterobacteriaceae</taxon>
        <taxon>Escherichia</taxon>
    </lineage>
</organism>
<reference key="1">
    <citation type="journal article" date="2001" name="Nature">
        <title>Genome sequence of enterohaemorrhagic Escherichia coli O157:H7.</title>
        <authorList>
            <person name="Perna N.T."/>
            <person name="Plunkett G. III"/>
            <person name="Burland V."/>
            <person name="Mau B."/>
            <person name="Glasner J.D."/>
            <person name="Rose D.J."/>
            <person name="Mayhew G.F."/>
            <person name="Evans P.S."/>
            <person name="Gregor J."/>
            <person name="Kirkpatrick H.A."/>
            <person name="Posfai G."/>
            <person name="Hackett J."/>
            <person name="Klink S."/>
            <person name="Boutin A."/>
            <person name="Shao Y."/>
            <person name="Miller L."/>
            <person name="Grotbeck E.J."/>
            <person name="Davis N.W."/>
            <person name="Lim A."/>
            <person name="Dimalanta E.T."/>
            <person name="Potamousis K."/>
            <person name="Apodaca J."/>
            <person name="Anantharaman T.S."/>
            <person name="Lin J."/>
            <person name="Yen G."/>
            <person name="Schwartz D.C."/>
            <person name="Welch R.A."/>
            <person name="Blattner F.R."/>
        </authorList>
    </citation>
    <scope>NUCLEOTIDE SEQUENCE [LARGE SCALE GENOMIC DNA]</scope>
    <source>
        <strain>O157:H7 / EDL933 / ATCC 700927 / EHEC</strain>
    </source>
</reference>
<reference key="2">
    <citation type="journal article" date="2001" name="DNA Res.">
        <title>Complete genome sequence of enterohemorrhagic Escherichia coli O157:H7 and genomic comparison with a laboratory strain K-12.</title>
        <authorList>
            <person name="Hayashi T."/>
            <person name="Makino K."/>
            <person name="Ohnishi M."/>
            <person name="Kurokawa K."/>
            <person name="Ishii K."/>
            <person name="Yokoyama K."/>
            <person name="Han C.-G."/>
            <person name="Ohtsubo E."/>
            <person name="Nakayama K."/>
            <person name="Murata T."/>
            <person name="Tanaka M."/>
            <person name="Tobe T."/>
            <person name="Iida T."/>
            <person name="Takami H."/>
            <person name="Honda T."/>
            <person name="Sasakawa C."/>
            <person name="Ogasawara N."/>
            <person name="Yasunaga T."/>
            <person name="Kuhara S."/>
            <person name="Shiba T."/>
            <person name="Hattori M."/>
            <person name="Shinagawa H."/>
        </authorList>
    </citation>
    <scope>NUCLEOTIDE SEQUENCE [LARGE SCALE GENOMIC DNA]</scope>
    <source>
        <strain>O157:H7 / Sakai / RIMD 0509952 / EHEC</strain>
    </source>
</reference>
<keyword id="KW-0997">Cell inner membrane</keyword>
<keyword id="KW-1003">Cell membrane</keyword>
<keyword id="KW-0378">Hydrolase</keyword>
<keyword id="KW-0441">Lipid A biosynthesis</keyword>
<keyword id="KW-0444">Lipid biosynthesis</keyword>
<keyword id="KW-0443">Lipid metabolism</keyword>
<keyword id="KW-0464">Manganese</keyword>
<keyword id="KW-0472">Membrane</keyword>
<keyword id="KW-0479">Metal-binding</keyword>
<keyword id="KW-1185">Reference proteome</keyword>